<organism>
    <name type="scientific">Mycobacterium leprae (strain Br4923)</name>
    <dbReference type="NCBI Taxonomy" id="561304"/>
    <lineage>
        <taxon>Bacteria</taxon>
        <taxon>Bacillati</taxon>
        <taxon>Actinomycetota</taxon>
        <taxon>Actinomycetes</taxon>
        <taxon>Mycobacteriales</taxon>
        <taxon>Mycobacteriaceae</taxon>
        <taxon>Mycobacterium</taxon>
    </lineage>
</organism>
<name>CH10_MYCLB</name>
<feature type="chain" id="PRO_1000146912" description="Co-chaperonin GroES">
    <location>
        <begin position="1"/>
        <end position="100"/>
    </location>
</feature>
<reference key="1">
    <citation type="journal article" date="2009" name="Nat. Genet.">
        <title>Comparative genomic and phylogeographic analysis of Mycobacterium leprae.</title>
        <authorList>
            <person name="Monot M."/>
            <person name="Honore N."/>
            <person name="Garnier T."/>
            <person name="Zidane N."/>
            <person name="Sherafi D."/>
            <person name="Paniz-Mondolfi A."/>
            <person name="Matsuoka M."/>
            <person name="Taylor G.M."/>
            <person name="Donoghue H.D."/>
            <person name="Bouwman A."/>
            <person name="Mays S."/>
            <person name="Watson C."/>
            <person name="Lockwood D."/>
            <person name="Khamispour A."/>
            <person name="Dowlati Y."/>
            <person name="Jianping S."/>
            <person name="Rea T.H."/>
            <person name="Vera-Cabrera L."/>
            <person name="Stefani M.M."/>
            <person name="Banu S."/>
            <person name="Macdonald M."/>
            <person name="Sapkota B.R."/>
            <person name="Spencer J.S."/>
            <person name="Thomas J."/>
            <person name="Harshman K."/>
            <person name="Singh P."/>
            <person name="Busso P."/>
            <person name="Gattiker A."/>
            <person name="Rougemont J."/>
            <person name="Brennan P.J."/>
            <person name="Cole S.T."/>
        </authorList>
    </citation>
    <scope>NUCLEOTIDE SEQUENCE [LARGE SCALE GENOMIC DNA]</scope>
    <source>
        <strain>Br4923</strain>
    </source>
</reference>
<gene>
    <name evidence="1" type="primary">groES</name>
    <name evidence="1" type="synonym">groS</name>
    <name type="ordered locus">MLBr00380</name>
</gene>
<sequence length="100" mass="10800">MAKVKIKPLEDKILVQAGEAETMTPSGLVIPENAKEKPQEGTVVAVGPGRWDEDGAKRIPVDVSEGDIVIYSKYGGTEIKYNGEEYLILSARDVLAVVSK</sequence>
<accession>B8ZUD1</accession>
<keyword id="KW-0143">Chaperone</keyword>
<keyword id="KW-0963">Cytoplasm</keyword>
<evidence type="ECO:0000255" key="1">
    <source>
        <dbReference type="HAMAP-Rule" id="MF_00580"/>
    </source>
</evidence>
<proteinExistence type="inferred from homology"/>
<comment type="function">
    <text evidence="1">Together with the chaperonin GroEL, plays an essential role in assisting protein folding. The GroEL-GroES system forms a nano-cage that allows encapsulation of the non-native substrate proteins and provides a physical environment optimized to promote and accelerate protein folding. GroES binds to the apical surface of the GroEL ring, thereby capping the opening of the GroEL channel.</text>
</comment>
<comment type="subunit">
    <text evidence="1">Heptamer of 7 subunits arranged in a ring. Interacts with the chaperonin GroEL.</text>
</comment>
<comment type="subcellular location">
    <subcellularLocation>
        <location evidence="1">Cytoplasm</location>
    </subcellularLocation>
</comment>
<comment type="similarity">
    <text evidence="1">Belongs to the GroES chaperonin family.</text>
</comment>
<dbReference type="EMBL" id="FM211192">
    <property type="protein sequence ID" value="CAR70473.1"/>
    <property type="molecule type" value="Genomic_DNA"/>
</dbReference>
<dbReference type="SMR" id="B8ZUD1"/>
<dbReference type="KEGG" id="mlb:MLBr00380"/>
<dbReference type="HOGENOM" id="CLU_132825_2_0_11"/>
<dbReference type="Proteomes" id="UP000006900">
    <property type="component" value="Chromosome"/>
</dbReference>
<dbReference type="GO" id="GO:0005737">
    <property type="term" value="C:cytoplasm"/>
    <property type="evidence" value="ECO:0007669"/>
    <property type="project" value="UniProtKB-SubCell"/>
</dbReference>
<dbReference type="GO" id="GO:0005524">
    <property type="term" value="F:ATP binding"/>
    <property type="evidence" value="ECO:0007669"/>
    <property type="project" value="InterPro"/>
</dbReference>
<dbReference type="GO" id="GO:0046872">
    <property type="term" value="F:metal ion binding"/>
    <property type="evidence" value="ECO:0007669"/>
    <property type="project" value="TreeGrafter"/>
</dbReference>
<dbReference type="GO" id="GO:0044183">
    <property type="term" value="F:protein folding chaperone"/>
    <property type="evidence" value="ECO:0007669"/>
    <property type="project" value="InterPro"/>
</dbReference>
<dbReference type="GO" id="GO:0051087">
    <property type="term" value="F:protein-folding chaperone binding"/>
    <property type="evidence" value="ECO:0007669"/>
    <property type="project" value="TreeGrafter"/>
</dbReference>
<dbReference type="GO" id="GO:0051082">
    <property type="term" value="F:unfolded protein binding"/>
    <property type="evidence" value="ECO:0007669"/>
    <property type="project" value="TreeGrafter"/>
</dbReference>
<dbReference type="GO" id="GO:0051085">
    <property type="term" value="P:chaperone cofactor-dependent protein refolding"/>
    <property type="evidence" value="ECO:0007669"/>
    <property type="project" value="TreeGrafter"/>
</dbReference>
<dbReference type="CDD" id="cd00320">
    <property type="entry name" value="cpn10"/>
    <property type="match status" value="1"/>
</dbReference>
<dbReference type="FunFam" id="2.30.33.40:FF:000001">
    <property type="entry name" value="10 kDa chaperonin"/>
    <property type="match status" value="1"/>
</dbReference>
<dbReference type="Gene3D" id="2.30.33.40">
    <property type="entry name" value="GroES chaperonin"/>
    <property type="match status" value="1"/>
</dbReference>
<dbReference type="HAMAP" id="MF_00580">
    <property type="entry name" value="CH10"/>
    <property type="match status" value="1"/>
</dbReference>
<dbReference type="InterPro" id="IPR020818">
    <property type="entry name" value="Chaperonin_GroES"/>
</dbReference>
<dbReference type="InterPro" id="IPR037124">
    <property type="entry name" value="Chaperonin_GroES_sf"/>
</dbReference>
<dbReference type="InterPro" id="IPR018369">
    <property type="entry name" value="Chaprnonin_Cpn10_CS"/>
</dbReference>
<dbReference type="InterPro" id="IPR011032">
    <property type="entry name" value="GroES-like_sf"/>
</dbReference>
<dbReference type="NCBIfam" id="NF001530">
    <property type="entry name" value="PRK00364.1-6"/>
    <property type="match status" value="1"/>
</dbReference>
<dbReference type="NCBIfam" id="NF001531">
    <property type="entry name" value="PRK00364.2-2"/>
    <property type="match status" value="1"/>
</dbReference>
<dbReference type="NCBIfam" id="NF001533">
    <property type="entry name" value="PRK00364.2-4"/>
    <property type="match status" value="1"/>
</dbReference>
<dbReference type="NCBIfam" id="NF001534">
    <property type="entry name" value="PRK00364.2-5"/>
    <property type="match status" value="1"/>
</dbReference>
<dbReference type="PANTHER" id="PTHR10772">
    <property type="entry name" value="10 KDA HEAT SHOCK PROTEIN"/>
    <property type="match status" value="1"/>
</dbReference>
<dbReference type="PANTHER" id="PTHR10772:SF58">
    <property type="entry name" value="CO-CHAPERONIN GROES"/>
    <property type="match status" value="1"/>
</dbReference>
<dbReference type="Pfam" id="PF00166">
    <property type="entry name" value="Cpn10"/>
    <property type="match status" value="1"/>
</dbReference>
<dbReference type="PRINTS" id="PR00297">
    <property type="entry name" value="CHAPERONIN10"/>
</dbReference>
<dbReference type="SMART" id="SM00883">
    <property type="entry name" value="Cpn10"/>
    <property type="match status" value="1"/>
</dbReference>
<dbReference type="SUPFAM" id="SSF50129">
    <property type="entry name" value="GroES-like"/>
    <property type="match status" value="1"/>
</dbReference>
<dbReference type="PROSITE" id="PS00681">
    <property type="entry name" value="CHAPERONINS_CPN10"/>
    <property type="match status" value="1"/>
</dbReference>
<protein>
    <recommendedName>
        <fullName evidence="1">Co-chaperonin GroES</fullName>
    </recommendedName>
    <alternativeName>
        <fullName evidence="1">10 kDa chaperonin</fullName>
    </alternativeName>
    <alternativeName>
        <fullName evidence="1">Chaperonin-10</fullName>
        <shortName evidence="1">Cpn10</shortName>
    </alternativeName>
</protein>